<sequence length="354" mass="37483">MKFLDQCKIYVRSGNGGGGAVSFRREKYIEYGGPDGGDGGRGGDVWIEAVEGLNTLIDYRYQQHFKAGTGVHGMGRGRHGAAGDDVLLKVPVGTQVLEEDKETLIADLDTAGMTLRLAKGGNGGWGNLHFKGPVNQAPKYANPGQDGEELWVWLRLKLIADVGLVGLPNAGKSTFLAAATAARPKIADYPFTTLTPNLGVVDLSTSERFVLADIPGLIEGASEGAGLGTRFLGHVERSAVLIHLVDATQDDIAGAWTTIRGELEAYGDELADKSEILALNKVDALDPETRKAKAAELQAVSGIKPMLVSGVSGEGVTELLRAAFTQVRIRRGETPAEAAIDEAPEEETPGGWQP</sequence>
<proteinExistence type="inferred from homology"/>
<gene>
    <name evidence="1" type="primary">obg</name>
    <name type="ordered locus">Caul_4712</name>
</gene>
<dbReference type="EC" id="3.6.5.-" evidence="1"/>
<dbReference type="EMBL" id="CP000927">
    <property type="protein sequence ID" value="ABZ73832.1"/>
    <property type="molecule type" value="Genomic_DNA"/>
</dbReference>
<dbReference type="SMR" id="B0T310"/>
<dbReference type="STRING" id="366602.Caul_4712"/>
<dbReference type="KEGG" id="cak:Caul_4712"/>
<dbReference type="eggNOG" id="COG0536">
    <property type="taxonomic scope" value="Bacteria"/>
</dbReference>
<dbReference type="HOGENOM" id="CLU_011747_2_0_5"/>
<dbReference type="OrthoDB" id="9807318at2"/>
<dbReference type="GO" id="GO:0005737">
    <property type="term" value="C:cytoplasm"/>
    <property type="evidence" value="ECO:0007669"/>
    <property type="project" value="UniProtKB-SubCell"/>
</dbReference>
<dbReference type="GO" id="GO:0005525">
    <property type="term" value="F:GTP binding"/>
    <property type="evidence" value="ECO:0007669"/>
    <property type="project" value="UniProtKB-UniRule"/>
</dbReference>
<dbReference type="GO" id="GO:0003924">
    <property type="term" value="F:GTPase activity"/>
    <property type="evidence" value="ECO:0007669"/>
    <property type="project" value="UniProtKB-UniRule"/>
</dbReference>
<dbReference type="GO" id="GO:0000287">
    <property type="term" value="F:magnesium ion binding"/>
    <property type="evidence" value="ECO:0007669"/>
    <property type="project" value="InterPro"/>
</dbReference>
<dbReference type="GO" id="GO:0042254">
    <property type="term" value="P:ribosome biogenesis"/>
    <property type="evidence" value="ECO:0007669"/>
    <property type="project" value="UniProtKB-UniRule"/>
</dbReference>
<dbReference type="CDD" id="cd01898">
    <property type="entry name" value="Obg"/>
    <property type="match status" value="1"/>
</dbReference>
<dbReference type="FunFam" id="2.70.210.12:FF:000001">
    <property type="entry name" value="GTPase Obg"/>
    <property type="match status" value="1"/>
</dbReference>
<dbReference type="Gene3D" id="2.70.210.12">
    <property type="entry name" value="GTP1/OBG domain"/>
    <property type="match status" value="1"/>
</dbReference>
<dbReference type="Gene3D" id="3.40.50.300">
    <property type="entry name" value="P-loop containing nucleotide triphosphate hydrolases"/>
    <property type="match status" value="1"/>
</dbReference>
<dbReference type="HAMAP" id="MF_01454">
    <property type="entry name" value="GTPase_Obg"/>
    <property type="match status" value="1"/>
</dbReference>
<dbReference type="InterPro" id="IPR031167">
    <property type="entry name" value="G_OBG"/>
</dbReference>
<dbReference type="InterPro" id="IPR006073">
    <property type="entry name" value="GTP-bd"/>
</dbReference>
<dbReference type="InterPro" id="IPR014100">
    <property type="entry name" value="GTP-bd_Obg/CgtA"/>
</dbReference>
<dbReference type="InterPro" id="IPR006074">
    <property type="entry name" value="GTP1-OBG_CS"/>
</dbReference>
<dbReference type="InterPro" id="IPR006169">
    <property type="entry name" value="GTP1_OBG_dom"/>
</dbReference>
<dbReference type="InterPro" id="IPR036726">
    <property type="entry name" value="GTP1_OBG_dom_sf"/>
</dbReference>
<dbReference type="InterPro" id="IPR045086">
    <property type="entry name" value="OBG_GTPase"/>
</dbReference>
<dbReference type="InterPro" id="IPR027417">
    <property type="entry name" value="P-loop_NTPase"/>
</dbReference>
<dbReference type="NCBIfam" id="TIGR02729">
    <property type="entry name" value="Obg_CgtA"/>
    <property type="match status" value="1"/>
</dbReference>
<dbReference type="NCBIfam" id="NF008955">
    <property type="entry name" value="PRK12297.1"/>
    <property type="match status" value="1"/>
</dbReference>
<dbReference type="NCBIfam" id="NF008956">
    <property type="entry name" value="PRK12299.1"/>
    <property type="match status" value="1"/>
</dbReference>
<dbReference type="PANTHER" id="PTHR11702">
    <property type="entry name" value="DEVELOPMENTALLY REGULATED GTP-BINDING PROTEIN-RELATED"/>
    <property type="match status" value="1"/>
</dbReference>
<dbReference type="PANTHER" id="PTHR11702:SF31">
    <property type="entry name" value="MITOCHONDRIAL RIBOSOME-ASSOCIATED GTPASE 2"/>
    <property type="match status" value="1"/>
</dbReference>
<dbReference type="Pfam" id="PF01018">
    <property type="entry name" value="GTP1_OBG"/>
    <property type="match status" value="1"/>
</dbReference>
<dbReference type="Pfam" id="PF01926">
    <property type="entry name" value="MMR_HSR1"/>
    <property type="match status" value="1"/>
</dbReference>
<dbReference type="PIRSF" id="PIRSF002401">
    <property type="entry name" value="GTP_bd_Obg/CgtA"/>
    <property type="match status" value="1"/>
</dbReference>
<dbReference type="PRINTS" id="PR00326">
    <property type="entry name" value="GTP1OBG"/>
</dbReference>
<dbReference type="SUPFAM" id="SSF82051">
    <property type="entry name" value="Obg GTP-binding protein N-terminal domain"/>
    <property type="match status" value="1"/>
</dbReference>
<dbReference type="SUPFAM" id="SSF52540">
    <property type="entry name" value="P-loop containing nucleoside triphosphate hydrolases"/>
    <property type="match status" value="1"/>
</dbReference>
<dbReference type="PROSITE" id="PS51710">
    <property type="entry name" value="G_OBG"/>
    <property type="match status" value="1"/>
</dbReference>
<dbReference type="PROSITE" id="PS00905">
    <property type="entry name" value="GTP1_OBG"/>
    <property type="match status" value="1"/>
</dbReference>
<dbReference type="PROSITE" id="PS51883">
    <property type="entry name" value="OBG"/>
    <property type="match status" value="1"/>
</dbReference>
<reference key="1">
    <citation type="submission" date="2008-01" db="EMBL/GenBank/DDBJ databases">
        <title>Complete sequence of chromosome of Caulobacter sp. K31.</title>
        <authorList>
            <consortium name="US DOE Joint Genome Institute"/>
            <person name="Copeland A."/>
            <person name="Lucas S."/>
            <person name="Lapidus A."/>
            <person name="Barry K."/>
            <person name="Glavina del Rio T."/>
            <person name="Dalin E."/>
            <person name="Tice H."/>
            <person name="Pitluck S."/>
            <person name="Bruce D."/>
            <person name="Goodwin L."/>
            <person name="Thompson L.S."/>
            <person name="Brettin T."/>
            <person name="Detter J.C."/>
            <person name="Han C."/>
            <person name="Schmutz J."/>
            <person name="Larimer F."/>
            <person name="Land M."/>
            <person name="Hauser L."/>
            <person name="Kyrpides N."/>
            <person name="Kim E."/>
            <person name="Stephens C."/>
            <person name="Richardson P."/>
        </authorList>
    </citation>
    <scope>NUCLEOTIDE SEQUENCE [LARGE SCALE GENOMIC DNA]</scope>
    <source>
        <strain>K31</strain>
    </source>
</reference>
<comment type="function">
    <text evidence="1">An essential GTPase which binds GTP, GDP and possibly (p)ppGpp with moderate affinity, with high nucleotide exchange rates and a fairly low GTP hydrolysis rate. Plays a role in control of the cell cycle, stress response, ribosome biogenesis and in those bacteria that undergo differentiation, in morphogenesis control.</text>
</comment>
<comment type="cofactor">
    <cofactor evidence="1">
        <name>Mg(2+)</name>
        <dbReference type="ChEBI" id="CHEBI:18420"/>
    </cofactor>
</comment>
<comment type="subunit">
    <text evidence="1">Monomer.</text>
</comment>
<comment type="subcellular location">
    <subcellularLocation>
        <location evidence="1">Cytoplasm</location>
    </subcellularLocation>
</comment>
<comment type="similarity">
    <text evidence="1">Belongs to the TRAFAC class OBG-HflX-like GTPase superfamily. OBG GTPase family.</text>
</comment>
<feature type="chain" id="PRO_0000385811" description="GTPase Obg">
    <location>
        <begin position="1"/>
        <end position="354"/>
    </location>
</feature>
<feature type="domain" description="Obg" evidence="2">
    <location>
        <begin position="1"/>
        <end position="159"/>
    </location>
</feature>
<feature type="domain" description="OBG-type G" evidence="1">
    <location>
        <begin position="160"/>
        <end position="328"/>
    </location>
</feature>
<feature type="region of interest" description="Disordered" evidence="3">
    <location>
        <begin position="333"/>
        <end position="354"/>
    </location>
</feature>
<feature type="compositionally biased region" description="Acidic residues" evidence="3">
    <location>
        <begin position="339"/>
        <end position="348"/>
    </location>
</feature>
<feature type="binding site" evidence="1">
    <location>
        <begin position="166"/>
        <end position="173"/>
    </location>
    <ligand>
        <name>GTP</name>
        <dbReference type="ChEBI" id="CHEBI:37565"/>
    </ligand>
</feature>
<feature type="binding site" evidence="1">
    <location>
        <position position="173"/>
    </location>
    <ligand>
        <name>Mg(2+)</name>
        <dbReference type="ChEBI" id="CHEBI:18420"/>
    </ligand>
</feature>
<feature type="binding site" evidence="1">
    <location>
        <begin position="191"/>
        <end position="195"/>
    </location>
    <ligand>
        <name>GTP</name>
        <dbReference type="ChEBI" id="CHEBI:37565"/>
    </ligand>
</feature>
<feature type="binding site" evidence="1">
    <location>
        <position position="193"/>
    </location>
    <ligand>
        <name>Mg(2+)</name>
        <dbReference type="ChEBI" id="CHEBI:18420"/>
    </ligand>
</feature>
<feature type="binding site" evidence="1">
    <location>
        <begin position="213"/>
        <end position="216"/>
    </location>
    <ligand>
        <name>GTP</name>
        <dbReference type="ChEBI" id="CHEBI:37565"/>
    </ligand>
</feature>
<feature type="binding site" evidence="1">
    <location>
        <begin position="280"/>
        <end position="283"/>
    </location>
    <ligand>
        <name>GTP</name>
        <dbReference type="ChEBI" id="CHEBI:37565"/>
    </ligand>
</feature>
<feature type="binding site" evidence="1">
    <location>
        <begin position="309"/>
        <end position="311"/>
    </location>
    <ligand>
        <name>GTP</name>
        <dbReference type="ChEBI" id="CHEBI:37565"/>
    </ligand>
</feature>
<evidence type="ECO:0000255" key="1">
    <source>
        <dbReference type="HAMAP-Rule" id="MF_01454"/>
    </source>
</evidence>
<evidence type="ECO:0000255" key="2">
    <source>
        <dbReference type="PROSITE-ProRule" id="PRU01231"/>
    </source>
</evidence>
<evidence type="ECO:0000256" key="3">
    <source>
        <dbReference type="SAM" id="MobiDB-lite"/>
    </source>
</evidence>
<accession>B0T310</accession>
<protein>
    <recommendedName>
        <fullName evidence="1">GTPase Obg</fullName>
        <ecNumber evidence="1">3.6.5.-</ecNumber>
    </recommendedName>
    <alternativeName>
        <fullName evidence="1">GTP-binding protein Obg</fullName>
    </alternativeName>
</protein>
<name>OBG_CAUSK</name>
<keyword id="KW-0963">Cytoplasm</keyword>
<keyword id="KW-0342">GTP-binding</keyword>
<keyword id="KW-0378">Hydrolase</keyword>
<keyword id="KW-0460">Magnesium</keyword>
<keyword id="KW-0479">Metal-binding</keyword>
<keyword id="KW-0547">Nucleotide-binding</keyword>
<organism>
    <name type="scientific">Caulobacter sp. (strain K31)</name>
    <dbReference type="NCBI Taxonomy" id="366602"/>
    <lineage>
        <taxon>Bacteria</taxon>
        <taxon>Pseudomonadati</taxon>
        <taxon>Pseudomonadota</taxon>
        <taxon>Alphaproteobacteria</taxon>
        <taxon>Caulobacterales</taxon>
        <taxon>Caulobacteraceae</taxon>
        <taxon>Caulobacter</taxon>
    </lineage>
</organism>